<accession>Q15QG8</accession>
<dbReference type="EC" id="1.1.1.290" evidence="1"/>
<dbReference type="EMBL" id="CP000388">
    <property type="protein sequence ID" value="ABG41870.1"/>
    <property type="molecule type" value="Genomic_DNA"/>
</dbReference>
<dbReference type="RefSeq" id="WP_011576100.1">
    <property type="nucleotide sequence ID" value="NC_008228.1"/>
</dbReference>
<dbReference type="SMR" id="Q15QG8"/>
<dbReference type="STRING" id="342610.Patl_3364"/>
<dbReference type="KEGG" id="pat:Patl_3364"/>
<dbReference type="eggNOG" id="COG0111">
    <property type="taxonomic scope" value="Bacteria"/>
</dbReference>
<dbReference type="HOGENOM" id="CLU_019796_4_0_6"/>
<dbReference type="OrthoDB" id="9770208at2"/>
<dbReference type="UniPathway" id="UPA00244">
    <property type="reaction ID" value="UER00310"/>
</dbReference>
<dbReference type="Proteomes" id="UP000001981">
    <property type="component" value="Chromosome"/>
</dbReference>
<dbReference type="GO" id="GO:0005829">
    <property type="term" value="C:cytosol"/>
    <property type="evidence" value="ECO:0007669"/>
    <property type="project" value="TreeGrafter"/>
</dbReference>
<dbReference type="GO" id="GO:0033711">
    <property type="term" value="F:4-phosphoerythronate dehydrogenase activity"/>
    <property type="evidence" value="ECO:0007669"/>
    <property type="project" value="UniProtKB-EC"/>
</dbReference>
<dbReference type="GO" id="GO:0051287">
    <property type="term" value="F:NAD binding"/>
    <property type="evidence" value="ECO:0007669"/>
    <property type="project" value="InterPro"/>
</dbReference>
<dbReference type="GO" id="GO:0046983">
    <property type="term" value="F:protein dimerization activity"/>
    <property type="evidence" value="ECO:0007669"/>
    <property type="project" value="InterPro"/>
</dbReference>
<dbReference type="GO" id="GO:0036001">
    <property type="term" value="P:'de novo' pyridoxal 5'-phosphate biosynthetic process"/>
    <property type="evidence" value="ECO:0007669"/>
    <property type="project" value="TreeGrafter"/>
</dbReference>
<dbReference type="GO" id="GO:0008615">
    <property type="term" value="P:pyridoxine biosynthetic process"/>
    <property type="evidence" value="ECO:0007669"/>
    <property type="project" value="UniProtKB-UniRule"/>
</dbReference>
<dbReference type="CDD" id="cd12158">
    <property type="entry name" value="ErythrP_dh"/>
    <property type="match status" value="1"/>
</dbReference>
<dbReference type="Gene3D" id="3.30.1370.170">
    <property type="match status" value="1"/>
</dbReference>
<dbReference type="Gene3D" id="3.40.50.720">
    <property type="entry name" value="NAD(P)-binding Rossmann-like Domain"/>
    <property type="match status" value="2"/>
</dbReference>
<dbReference type="HAMAP" id="MF_01825">
    <property type="entry name" value="PdxB"/>
    <property type="match status" value="1"/>
</dbReference>
<dbReference type="InterPro" id="IPR006139">
    <property type="entry name" value="D-isomer_2_OHA_DH_cat_dom"/>
</dbReference>
<dbReference type="InterPro" id="IPR029753">
    <property type="entry name" value="D-isomer_DH_CS"/>
</dbReference>
<dbReference type="InterPro" id="IPR006140">
    <property type="entry name" value="D-isomer_DH_NAD-bd"/>
</dbReference>
<dbReference type="InterPro" id="IPR020921">
    <property type="entry name" value="Erythronate-4-P_DHase"/>
</dbReference>
<dbReference type="InterPro" id="IPR024531">
    <property type="entry name" value="Erythronate-4-P_DHase_dimer"/>
</dbReference>
<dbReference type="InterPro" id="IPR036291">
    <property type="entry name" value="NAD(P)-bd_dom_sf"/>
</dbReference>
<dbReference type="InterPro" id="IPR038251">
    <property type="entry name" value="PdxB_dimer_sf"/>
</dbReference>
<dbReference type="PANTHER" id="PTHR42938">
    <property type="entry name" value="FORMATE DEHYDROGENASE 1"/>
    <property type="match status" value="1"/>
</dbReference>
<dbReference type="PANTHER" id="PTHR42938:SF9">
    <property type="entry name" value="FORMATE DEHYDROGENASE 1"/>
    <property type="match status" value="1"/>
</dbReference>
<dbReference type="Pfam" id="PF00389">
    <property type="entry name" value="2-Hacid_dh"/>
    <property type="match status" value="1"/>
</dbReference>
<dbReference type="Pfam" id="PF02826">
    <property type="entry name" value="2-Hacid_dh_C"/>
    <property type="match status" value="1"/>
</dbReference>
<dbReference type="Pfam" id="PF11890">
    <property type="entry name" value="DUF3410"/>
    <property type="match status" value="1"/>
</dbReference>
<dbReference type="SUPFAM" id="SSF52283">
    <property type="entry name" value="Formate/glycerate dehydrogenase catalytic domain-like"/>
    <property type="match status" value="1"/>
</dbReference>
<dbReference type="SUPFAM" id="SSF51735">
    <property type="entry name" value="NAD(P)-binding Rossmann-fold domains"/>
    <property type="match status" value="1"/>
</dbReference>
<dbReference type="PROSITE" id="PS00671">
    <property type="entry name" value="D_2_HYDROXYACID_DH_3"/>
    <property type="match status" value="1"/>
</dbReference>
<organism>
    <name type="scientific">Pseudoalteromonas atlantica (strain T6c / ATCC BAA-1087)</name>
    <dbReference type="NCBI Taxonomy" id="3042615"/>
    <lineage>
        <taxon>Bacteria</taxon>
        <taxon>Pseudomonadati</taxon>
        <taxon>Pseudomonadota</taxon>
        <taxon>Gammaproteobacteria</taxon>
        <taxon>Alteromonadales</taxon>
        <taxon>Alteromonadaceae</taxon>
        <taxon>Paraglaciecola</taxon>
    </lineage>
</organism>
<comment type="function">
    <text evidence="1">Catalyzes the oxidation of erythronate-4-phosphate to 3-hydroxy-2-oxo-4-phosphonooxybutanoate.</text>
</comment>
<comment type="catalytic activity">
    <reaction evidence="1">
        <text>4-phospho-D-erythronate + NAD(+) = (R)-3-hydroxy-2-oxo-4-phosphooxybutanoate + NADH + H(+)</text>
        <dbReference type="Rhea" id="RHEA:18829"/>
        <dbReference type="ChEBI" id="CHEBI:15378"/>
        <dbReference type="ChEBI" id="CHEBI:57540"/>
        <dbReference type="ChEBI" id="CHEBI:57945"/>
        <dbReference type="ChEBI" id="CHEBI:58538"/>
        <dbReference type="ChEBI" id="CHEBI:58766"/>
        <dbReference type="EC" id="1.1.1.290"/>
    </reaction>
</comment>
<comment type="pathway">
    <text evidence="1">Cofactor biosynthesis; pyridoxine 5'-phosphate biosynthesis; pyridoxine 5'-phosphate from D-erythrose 4-phosphate: step 2/5.</text>
</comment>
<comment type="subunit">
    <text evidence="1">Homodimer.</text>
</comment>
<comment type="subcellular location">
    <subcellularLocation>
        <location evidence="1">Cytoplasm</location>
    </subcellularLocation>
</comment>
<comment type="similarity">
    <text evidence="1">Belongs to the D-isomer specific 2-hydroxyacid dehydrogenase family. PdxB subfamily.</text>
</comment>
<reference key="1">
    <citation type="submission" date="2006-06" db="EMBL/GenBank/DDBJ databases">
        <title>Complete sequence of Pseudoalteromonas atlantica T6c.</title>
        <authorList>
            <consortium name="US DOE Joint Genome Institute"/>
            <person name="Copeland A."/>
            <person name="Lucas S."/>
            <person name="Lapidus A."/>
            <person name="Barry K."/>
            <person name="Detter J.C."/>
            <person name="Glavina del Rio T."/>
            <person name="Hammon N."/>
            <person name="Israni S."/>
            <person name="Dalin E."/>
            <person name="Tice H."/>
            <person name="Pitluck S."/>
            <person name="Saunders E."/>
            <person name="Brettin T."/>
            <person name="Bruce D."/>
            <person name="Han C."/>
            <person name="Tapia R."/>
            <person name="Gilna P."/>
            <person name="Schmutz J."/>
            <person name="Larimer F."/>
            <person name="Land M."/>
            <person name="Hauser L."/>
            <person name="Kyrpides N."/>
            <person name="Kim E."/>
            <person name="Karls A.C."/>
            <person name="Bartlett D."/>
            <person name="Higgins B.P."/>
            <person name="Richardson P."/>
        </authorList>
    </citation>
    <scope>NUCLEOTIDE SEQUENCE [LARGE SCALE GENOMIC DNA]</scope>
    <source>
        <strain>T6c / ATCC BAA-1087</strain>
    </source>
</reference>
<gene>
    <name evidence="1" type="primary">pdxB</name>
    <name type="ordered locus">Patl_3364</name>
</gene>
<feature type="chain" id="PRO_0000297448" description="Erythronate-4-phosphate dehydrogenase">
    <location>
        <begin position="1"/>
        <end position="374"/>
    </location>
</feature>
<feature type="active site" evidence="1">
    <location>
        <position position="208"/>
    </location>
</feature>
<feature type="active site" evidence="1">
    <location>
        <position position="237"/>
    </location>
</feature>
<feature type="active site" description="Proton donor" evidence="1">
    <location>
        <position position="254"/>
    </location>
</feature>
<feature type="binding site" evidence="1">
    <location>
        <position position="45"/>
    </location>
    <ligand>
        <name>substrate</name>
    </ligand>
</feature>
<feature type="binding site" evidence="1">
    <location>
        <position position="67"/>
    </location>
    <ligand>
        <name>substrate</name>
    </ligand>
</feature>
<feature type="binding site" evidence="1">
    <location>
        <position position="147"/>
    </location>
    <ligand>
        <name>NAD(+)</name>
        <dbReference type="ChEBI" id="CHEBI:57540"/>
    </ligand>
</feature>
<feature type="binding site" evidence="1">
    <location>
        <position position="232"/>
    </location>
    <ligand>
        <name>NAD(+)</name>
        <dbReference type="ChEBI" id="CHEBI:57540"/>
    </ligand>
</feature>
<feature type="binding site" evidence="1">
    <location>
        <position position="257"/>
    </location>
    <ligand>
        <name>NAD(+)</name>
        <dbReference type="ChEBI" id="CHEBI:57540"/>
    </ligand>
</feature>
<proteinExistence type="inferred from homology"/>
<name>PDXB_PSEA6</name>
<sequence length="374" mass="41342">MKIYYEDSLPYAAEFFAGLGDSQVFSHKDVNGELVADADVLLVRSTTKVNAELLKANQNIKYVGTATAGTNHLDKEYLRSRGLDIHSAAGCNAVAVAEYVLSALFVMAEKLDWQLTTKTVGIVGAGHVGTRLTEKLTALGIRYHLCDPPLADAGDTRDFVDMDTIMQCDIISLHVPLIEGGQYNTGHMFDAKRIGQLRKDQLLINACRGEVIDNKALLKSFESGYKLNVVLDVWENEPDIDQALVPYIALATAHIAGHTVEGKARGTEMLYQQVCEQFGFNATKKLSDYLPAPQPSIITLDETLSGQAQLSALVLSVYDIRKDSKQFKETIEQPDQFRYIRKNYSIRREFAALSVNTGNYSGSEAIYALGFNRK</sequence>
<evidence type="ECO:0000255" key="1">
    <source>
        <dbReference type="HAMAP-Rule" id="MF_01825"/>
    </source>
</evidence>
<protein>
    <recommendedName>
        <fullName evidence="1">Erythronate-4-phosphate dehydrogenase</fullName>
        <ecNumber evidence="1">1.1.1.290</ecNumber>
    </recommendedName>
</protein>
<keyword id="KW-0963">Cytoplasm</keyword>
<keyword id="KW-0520">NAD</keyword>
<keyword id="KW-0560">Oxidoreductase</keyword>
<keyword id="KW-0664">Pyridoxine biosynthesis</keyword>